<feature type="initiator methionine" description="Removed" evidence="1">
    <location>
        <position position="1"/>
    </location>
</feature>
<feature type="chain" id="PRO_0000189345" description="Ferredoxin">
    <location>
        <begin position="2"/>
        <end position="99"/>
    </location>
</feature>
<feature type="domain" description="2Fe-2S ferredoxin-type" evidence="2">
    <location>
        <begin position="4"/>
        <end position="96"/>
    </location>
</feature>
<feature type="binding site" evidence="2">
    <location>
        <position position="42"/>
    </location>
    <ligand>
        <name>[2Fe-2S] cluster</name>
        <dbReference type="ChEBI" id="CHEBI:190135"/>
    </ligand>
</feature>
<feature type="binding site" evidence="2">
    <location>
        <position position="47"/>
    </location>
    <ligand>
        <name>[2Fe-2S] cluster</name>
        <dbReference type="ChEBI" id="CHEBI:190135"/>
    </ligand>
</feature>
<feature type="binding site" evidence="2">
    <location>
        <position position="50"/>
    </location>
    <ligand>
        <name>[2Fe-2S] cluster</name>
        <dbReference type="ChEBI" id="CHEBI:190135"/>
    </ligand>
</feature>
<feature type="binding site" evidence="2">
    <location>
        <position position="80"/>
    </location>
    <ligand>
        <name>[2Fe-2S] cluster</name>
        <dbReference type="ChEBI" id="CHEBI:190135"/>
    </ligand>
</feature>
<proteinExistence type="inferred from homology"/>
<gene>
    <name type="primary">petF</name>
</gene>
<keyword id="KW-0001">2Fe-2S</keyword>
<keyword id="KW-0150">Chloroplast</keyword>
<keyword id="KW-0249">Electron transport</keyword>
<keyword id="KW-0408">Iron</keyword>
<keyword id="KW-0411">Iron-sulfur</keyword>
<keyword id="KW-0479">Metal-binding</keyword>
<keyword id="KW-0934">Plastid</keyword>
<keyword id="KW-0813">Transport</keyword>
<sequence>MATYKVTLLSEEHDIDATIDCNDDVFLLDAAEEQGIELPYSCRAGACSTCAGKVTEGDIDQSEQTFLDDDQVGAGFVLTCIAYPKSDCTVLVHQEDELY</sequence>
<name>FER_TRICV</name>
<comment type="function">
    <text>Ferredoxins are iron-sulfur proteins that transfer electrons in a wide variety of metabolic reactions.</text>
</comment>
<comment type="cofactor">
    <cofactor>
        <name>[2Fe-2S] cluster</name>
        <dbReference type="ChEBI" id="CHEBI:190135"/>
    </cofactor>
    <text>Binds 1 [2Fe-2S] cluster.</text>
</comment>
<comment type="subunit">
    <text evidence="1">Forms a complex with heterodimeric ferredoxin-thioredoxin reductase (FTR) and thioredoxin.</text>
</comment>
<comment type="subcellular location">
    <subcellularLocation>
        <location>Plastid</location>
        <location>Chloroplast</location>
    </subcellularLocation>
</comment>
<comment type="similarity">
    <text evidence="3">Belongs to the 2Fe2S plant-type ferredoxin family.</text>
</comment>
<organism>
    <name type="scientific">Trieres chinensis</name>
    <name type="common">Marine centric diatom</name>
    <name type="synonym">Odontella sinensis</name>
    <dbReference type="NCBI Taxonomy" id="1514140"/>
    <lineage>
        <taxon>Eukaryota</taxon>
        <taxon>Sar</taxon>
        <taxon>Stramenopiles</taxon>
        <taxon>Ochrophyta</taxon>
        <taxon>Bacillariophyta</taxon>
        <taxon>Mediophyceae</taxon>
        <taxon>Biddulphiophycidae</taxon>
        <taxon>Eupodiscales</taxon>
        <taxon>Parodontellaceae</taxon>
        <taxon>Trieres</taxon>
    </lineage>
</organism>
<geneLocation type="chloroplast"/>
<protein>
    <recommendedName>
        <fullName>Ferredoxin</fullName>
    </recommendedName>
</protein>
<dbReference type="EMBL" id="Z67753">
    <property type="protein sequence ID" value="CAA91735.1"/>
    <property type="molecule type" value="Genomic_DNA"/>
</dbReference>
<dbReference type="PIR" id="S78362">
    <property type="entry name" value="S78362"/>
</dbReference>
<dbReference type="RefSeq" id="NP_043703.1">
    <property type="nucleotide sequence ID" value="NC_001713.1"/>
</dbReference>
<dbReference type="SMR" id="P49522"/>
<dbReference type="GeneID" id="801705"/>
<dbReference type="GO" id="GO:0009507">
    <property type="term" value="C:chloroplast"/>
    <property type="evidence" value="ECO:0007669"/>
    <property type="project" value="UniProtKB-SubCell"/>
</dbReference>
<dbReference type="GO" id="GO:0051537">
    <property type="term" value="F:2 iron, 2 sulfur cluster binding"/>
    <property type="evidence" value="ECO:0007669"/>
    <property type="project" value="UniProtKB-KW"/>
</dbReference>
<dbReference type="GO" id="GO:0009055">
    <property type="term" value="F:electron transfer activity"/>
    <property type="evidence" value="ECO:0007669"/>
    <property type="project" value="InterPro"/>
</dbReference>
<dbReference type="GO" id="GO:0046872">
    <property type="term" value="F:metal ion binding"/>
    <property type="evidence" value="ECO:0007669"/>
    <property type="project" value="UniProtKB-KW"/>
</dbReference>
<dbReference type="GO" id="GO:0022900">
    <property type="term" value="P:electron transport chain"/>
    <property type="evidence" value="ECO:0007669"/>
    <property type="project" value="InterPro"/>
</dbReference>
<dbReference type="CDD" id="cd00207">
    <property type="entry name" value="fer2"/>
    <property type="match status" value="1"/>
</dbReference>
<dbReference type="FunFam" id="3.10.20.30:FF:000014">
    <property type="entry name" value="Ferredoxin"/>
    <property type="match status" value="1"/>
</dbReference>
<dbReference type="Gene3D" id="3.10.20.30">
    <property type="match status" value="1"/>
</dbReference>
<dbReference type="InterPro" id="IPR036010">
    <property type="entry name" value="2Fe-2S_ferredoxin-like_sf"/>
</dbReference>
<dbReference type="InterPro" id="IPR001041">
    <property type="entry name" value="2Fe-2S_ferredoxin-type"/>
</dbReference>
<dbReference type="InterPro" id="IPR006058">
    <property type="entry name" value="2Fe2S_fd_BS"/>
</dbReference>
<dbReference type="InterPro" id="IPR012675">
    <property type="entry name" value="Beta-grasp_dom_sf"/>
</dbReference>
<dbReference type="InterPro" id="IPR010241">
    <property type="entry name" value="Fd_pln"/>
</dbReference>
<dbReference type="NCBIfam" id="TIGR02008">
    <property type="entry name" value="fdx_plant"/>
    <property type="match status" value="1"/>
</dbReference>
<dbReference type="PANTHER" id="PTHR43112">
    <property type="entry name" value="FERREDOXIN"/>
    <property type="match status" value="1"/>
</dbReference>
<dbReference type="PANTHER" id="PTHR43112:SF3">
    <property type="entry name" value="FERREDOXIN-2, CHLOROPLASTIC"/>
    <property type="match status" value="1"/>
</dbReference>
<dbReference type="Pfam" id="PF00111">
    <property type="entry name" value="Fer2"/>
    <property type="match status" value="1"/>
</dbReference>
<dbReference type="SUPFAM" id="SSF54292">
    <property type="entry name" value="2Fe-2S ferredoxin-like"/>
    <property type="match status" value="1"/>
</dbReference>
<dbReference type="PROSITE" id="PS00197">
    <property type="entry name" value="2FE2S_FER_1"/>
    <property type="match status" value="1"/>
</dbReference>
<dbReference type="PROSITE" id="PS51085">
    <property type="entry name" value="2FE2S_FER_2"/>
    <property type="match status" value="1"/>
</dbReference>
<evidence type="ECO:0000250" key="1"/>
<evidence type="ECO:0000255" key="2">
    <source>
        <dbReference type="PROSITE-ProRule" id="PRU00465"/>
    </source>
</evidence>
<evidence type="ECO:0000305" key="3"/>
<reference key="1">
    <citation type="journal article" date="1995" name="Plant Mol. Biol. Rep.">
        <title>The chloroplast genome of a chlorophyll a+c-containing alga, Odontella sinensis.</title>
        <authorList>
            <person name="Kowallik K.V."/>
            <person name="Stoebe B."/>
            <person name="Schaffran I."/>
            <person name="Kroth-Pancic P."/>
            <person name="Freier U."/>
        </authorList>
    </citation>
    <scope>NUCLEOTIDE SEQUENCE [LARGE SCALE GENOMIC DNA]</scope>
</reference>
<accession>P49522</accession>